<comment type="function">
    <text evidence="4">Converts proline to delta-1-pyrroline-5-carboxylate.</text>
</comment>
<comment type="catalytic activity">
    <reaction evidence="4">
        <text>L-proline + a quinone = (S)-1-pyrroline-5-carboxylate + a quinol + H(+)</text>
        <dbReference type="Rhea" id="RHEA:23784"/>
        <dbReference type="ChEBI" id="CHEBI:15378"/>
        <dbReference type="ChEBI" id="CHEBI:17388"/>
        <dbReference type="ChEBI" id="CHEBI:24646"/>
        <dbReference type="ChEBI" id="CHEBI:60039"/>
        <dbReference type="ChEBI" id="CHEBI:132124"/>
        <dbReference type="EC" id="1.5.5.2"/>
    </reaction>
</comment>
<comment type="cofactor">
    <cofactor evidence="1">
        <name>FAD</name>
        <dbReference type="ChEBI" id="CHEBI:57692"/>
    </cofactor>
</comment>
<comment type="biophysicochemical properties">
    <phDependence>
        <text evidence="4">Optimum pH is 7.5-8.</text>
    </phDependence>
    <temperatureDependence>
        <text evidence="4">Optimum temperature is 25 degrees Celsius. Loses 70% of activity upon activation at 45 degrees Celsius for 15 minutes.</text>
    </temperatureDependence>
</comment>
<comment type="pathway">
    <text>Amino-acid degradation; L-proline degradation into L-glutamate; L-glutamate from L-proline: step 1/2.</text>
</comment>
<comment type="similarity">
    <text evidence="5">Belongs to the proline oxidase family.</text>
</comment>
<proteinExistence type="evidence at protein level"/>
<sequence>MLRHVFLFLSQNKTLTKFAKAYGTRLGARRFVAGDTIESAVKTVKRLNRSGLCATIDYLGEYAASEKEANQVAEECKKAIQAIAEHQLDSELSLKLTSIGLDLSEELALTHLRAILSVAKQYDVAVTIDMEDYSHYEQTLSIYRQCKQEFEKLGTVIQAYLYRAAEDIKKMRDLKPNLRLVKGAYKESAAVAFPDKRGTDLHFQSLIKLQLLSGNYTAVATHDDDIIKFTKQLVAEHRIPASQFEFQMLYGIRPERQKELAKEGYRMRVYVPYGTDWFSYFMRRIAERPANAAFVLKGILKK</sequence>
<organism>
    <name type="scientific">Bacillus subtilis subsp. natto</name>
    <dbReference type="NCBI Taxonomy" id="86029"/>
    <lineage>
        <taxon>Bacteria</taxon>
        <taxon>Bacillati</taxon>
        <taxon>Bacillota</taxon>
        <taxon>Bacilli</taxon>
        <taxon>Bacillales</taxon>
        <taxon>Bacillaceae</taxon>
        <taxon>Bacillus</taxon>
    </lineage>
</organism>
<feature type="chain" id="PRO_0000361667" description="Proline dehydrogenase 1">
    <location>
        <begin position="1"/>
        <end position="302"/>
    </location>
</feature>
<feature type="active site" evidence="2">
    <location>
        <position position="129"/>
    </location>
</feature>
<feature type="active site" evidence="2">
    <location>
        <position position="179"/>
    </location>
</feature>
<feature type="binding site" evidence="3">
    <location>
        <position position="95"/>
    </location>
    <ligand>
        <name>substrate</name>
    </ligand>
</feature>
<feature type="binding site" evidence="2">
    <location>
        <position position="130"/>
    </location>
    <ligand>
        <name>FAD</name>
        <dbReference type="ChEBI" id="CHEBI:57692"/>
    </ligand>
</feature>
<feature type="binding site" evidence="2">
    <location>
        <position position="158"/>
    </location>
    <ligand>
        <name>FAD</name>
        <dbReference type="ChEBI" id="CHEBI:57692"/>
    </ligand>
</feature>
<feature type="binding site" evidence="2">
    <location>
        <begin position="182"/>
        <end position="184"/>
    </location>
    <ligand>
        <name>FAD</name>
        <dbReference type="ChEBI" id="CHEBI:57692"/>
    </ligand>
</feature>
<feature type="binding site" evidence="2">
    <location>
        <begin position="221"/>
        <end position="222"/>
    </location>
    <ligand>
        <name>FAD</name>
        <dbReference type="ChEBI" id="CHEBI:57692"/>
    </ligand>
</feature>
<feature type="binding site" evidence="3">
    <location>
        <begin position="283"/>
        <end position="284"/>
    </location>
    <ligand>
        <name>substrate</name>
    </ligand>
</feature>
<feature type="site" description="Critical for catalytic activity" evidence="2">
    <location>
        <position position="270"/>
    </location>
</feature>
<protein>
    <recommendedName>
        <fullName>Proline dehydrogenase 1</fullName>
        <shortName>PRODH 1</shortName>
        <ecNumber>1.5.5.2</ecNumber>
    </recommendedName>
    <alternativeName>
        <fullName>Proline oxidase 1</fullName>
    </alternativeName>
</protein>
<name>PROD1_BACNA</name>
<accession>Q8RMG1</accession>
<gene>
    <name type="primary">fadM</name>
    <name type="synonym">yusM</name>
</gene>
<reference key="1">
    <citation type="journal article" date="2007" name="J. Agric. Food Chem.">
        <title>Delta1-pyrroline-5-carboxylic acid formed by proline dehydrogenase from the Bacillus subtilis ssp. natto expressed in Escherichia coli as a precursor for 2-acetyl-1-pyrroline.</title>
        <authorList>
            <person name="Huang T.-C."/>
            <person name="Huang Y.-W."/>
            <person name="Hung H.-J."/>
            <person name="Ho C.-T."/>
            <person name="Wu M.-L."/>
        </authorList>
    </citation>
    <scope>NUCLEOTIDE SEQUENCE [GENOMIC DNA]</scope>
    <scope>FUNCTION</scope>
    <scope>CATALYTIC ACTIVITY</scope>
    <scope>BIOPHYSICOCHEMICAL PROPERTIES</scope>
    <source>
        <strain>DSM 1088 / BCRC 14716 / NBRC 13169</strain>
    </source>
</reference>
<evidence type="ECO:0000250" key="1"/>
<evidence type="ECO:0000250" key="2">
    <source>
        <dbReference type="UniProtKB" id="Q72IB8"/>
    </source>
</evidence>
<evidence type="ECO:0000250" key="3">
    <source>
        <dbReference type="UniProtKB" id="Q9RW55"/>
    </source>
</evidence>
<evidence type="ECO:0000269" key="4">
    <source>
    </source>
</evidence>
<evidence type="ECO:0000305" key="5"/>
<keyword id="KW-0274">FAD</keyword>
<keyword id="KW-0285">Flavoprotein</keyword>
<keyword id="KW-0547">Nucleotide-binding</keyword>
<keyword id="KW-0560">Oxidoreductase</keyword>
<keyword id="KW-0642">Proline metabolism</keyword>
<dbReference type="EC" id="1.5.5.2"/>
<dbReference type="EMBL" id="AF497244">
    <property type="protein sequence ID" value="AAM16152.1"/>
    <property type="molecule type" value="Genomic_DNA"/>
</dbReference>
<dbReference type="SMR" id="Q8RMG1"/>
<dbReference type="BRENDA" id="1.5.99.B2">
    <property type="organism ID" value="658"/>
</dbReference>
<dbReference type="UniPathway" id="UPA00261">
    <property type="reaction ID" value="UER00373"/>
</dbReference>
<dbReference type="GO" id="GO:0071949">
    <property type="term" value="F:FAD binding"/>
    <property type="evidence" value="ECO:0000250"/>
    <property type="project" value="UniProtKB"/>
</dbReference>
<dbReference type="GO" id="GO:0004657">
    <property type="term" value="F:proline dehydrogenase activity"/>
    <property type="evidence" value="ECO:0007669"/>
    <property type="project" value="UniProtKB-EC"/>
</dbReference>
<dbReference type="GO" id="GO:0010133">
    <property type="term" value="P:proline catabolic process to glutamate"/>
    <property type="evidence" value="ECO:0007669"/>
    <property type="project" value="UniProtKB-UniPathway"/>
</dbReference>
<dbReference type="Gene3D" id="3.20.20.220">
    <property type="match status" value="1"/>
</dbReference>
<dbReference type="InterPro" id="IPR029041">
    <property type="entry name" value="FAD-linked_oxidoreductase-like"/>
</dbReference>
<dbReference type="InterPro" id="IPR008219">
    <property type="entry name" value="PRODH_bac_arc"/>
</dbReference>
<dbReference type="InterPro" id="IPR002872">
    <property type="entry name" value="Proline_DH_dom"/>
</dbReference>
<dbReference type="InterPro" id="IPR015659">
    <property type="entry name" value="Proline_oxidase"/>
</dbReference>
<dbReference type="PANTHER" id="PTHR13914:SF0">
    <property type="entry name" value="PROLINE DEHYDROGENASE 1, MITOCHONDRIAL"/>
    <property type="match status" value="1"/>
</dbReference>
<dbReference type="PANTHER" id="PTHR13914">
    <property type="entry name" value="PROLINE OXIDASE"/>
    <property type="match status" value="1"/>
</dbReference>
<dbReference type="Pfam" id="PF01619">
    <property type="entry name" value="Pro_dh"/>
    <property type="match status" value="1"/>
</dbReference>
<dbReference type="PIRSF" id="PIRSF000196">
    <property type="entry name" value="Pro_dehydrog"/>
    <property type="match status" value="1"/>
</dbReference>
<dbReference type="SUPFAM" id="SSF51730">
    <property type="entry name" value="FAD-linked oxidoreductase"/>
    <property type="match status" value="1"/>
</dbReference>